<comment type="function">
    <text evidence="2 7 8 9">Functions as an olfactory receptor activated by urine odorants, uroguanylin and guanylin and as well by the volatile semiochemicals carbon disulfide (CS2) and carbon dioxide (CO2) (PubMed:17702944, PubMed:17724338, PubMed:20637621). Has guanylate cyclase activity upon binding of the ligand (By similarity). Activation of GUCY2D neurons leads to the cGMP-dependent activation of the CNGA3 channels, membrane depolarization and an increase in action potential frequency (PubMed:17724338, PubMed:20637621). Signaling pathways activated by GUCY2D may trigger social behaviors such as acquisition of food preference (PubMed:20637621).</text>
</comment>
<comment type="catalytic activity">
    <reaction evidence="2">
        <text>GTP = 3',5'-cyclic GMP + diphosphate</text>
        <dbReference type="Rhea" id="RHEA:13665"/>
        <dbReference type="ChEBI" id="CHEBI:33019"/>
        <dbReference type="ChEBI" id="CHEBI:37565"/>
        <dbReference type="ChEBI" id="CHEBI:57746"/>
        <dbReference type="EC" id="4.6.1.2"/>
    </reaction>
</comment>
<comment type="activity regulation">
    <text evidence="2">Activated by Ca(2+).</text>
</comment>
<comment type="subunit">
    <text evidence="2">Interacts (via the catalytic domain) with NCALD.</text>
</comment>
<comment type="subcellular location">
    <subcellularLocation>
        <location evidence="10">Cell projection</location>
        <location evidence="10">Cilium membrane</location>
        <topology>Single-pass type I membrane protein</topology>
    </subcellularLocation>
</comment>
<comment type="tissue specificity">
    <text evidence="10">Found in a subset of olfactory neurons in the main olfactory epithelium.</text>
</comment>
<comment type="domain">
    <text evidence="11">The protein kinase domain is predicted to be catalytically inactive.</text>
</comment>
<comment type="disruption phenotype">
    <text evidence="8">Deficient mice lack olfactory response to uroguanylin and guanylin.</text>
</comment>
<comment type="similarity">
    <text evidence="11">Belongs to the adenylyl cyclase class-4/guanylyl cyclase family.</text>
</comment>
<comment type="caution">
    <text evidence="11">The gene names for receptor guanylyl cyclases are inconsistent between mouse and human. The ortholog of the mouse Gucy2d gene is a pseudogene in humans. The mouse Gucy2d is not an ortholog of the human GUCY2D gene, the latter of which encodes a retinal receptor guanylyl cyclase involved in phototransduction.</text>
</comment>
<evidence type="ECO:0000250" key="1"/>
<evidence type="ECO:0000250" key="2">
    <source>
        <dbReference type="UniProtKB" id="P51839"/>
    </source>
</evidence>
<evidence type="ECO:0000255" key="3"/>
<evidence type="ECO:0000255" key="4">
    <source>
        <dbReference type="PROSITE-ProRule" id="PRU00099"/>
    </source>
</evidence>
<evidence type="ECO:0000255" key="5">
    <source>
        <dbReference type="PROSITE-ProRule" id="PRU00159"/>
    </source>
</evidence>
<evidence type="ECO:0000256" key="6">
    <source>
        <dbReference type="SAM" id="MobiDB-lite"/>
    </source>
</evidence>
<evidence type="ECO:0000269" key="7">
    <source>
    </source>
</evidence>
<evidence type="ECO:0000269" key="8">
    <source>
    </source>
</evidence>
<evidence type="ECO:0000269" key="9">
    <source>
    </source>
</evidence>
<evidence type="ECO:0000269" key="10">
    <source>
    </source>
</evidence>
<evidence type="ECO:0000305" key="11"/>
<evidence type="ECO:0000312" key="12">
    <source>
        <dbReference type="MGI" id="MGI:106030"/>
    </source>
</evidence>
<sequence length="1117" mass="122528">MAGLQQGCHFEGQNWTAPHWKTCLPCQGPWRLTVSHLKTVSSISVLSVVFWSVLLWADSLSLLAWARETFTLGVLGPWDCDPIFAQALPSIATQLAVDQVNQDASLLPGSQLDFKVLPTGCDTPHALATFVAHKNIVAAFVGPVNPGFCSAAALLAQGWGKSLFSWACEAPEGGGDLVPTLPSAADVLLSVMRHFGWARWAIVSSHQDIWVTTAQQLATAFRTHGLPIGLVTSLGPGEKGATEVCKQLHSVHGLKIVVLCMHSALLGGLEQTTLLHCAWEEGLTDGRLVFLPYDTLLFALPYGNRSYLVLDDHGPLQEAYDAVLTVSLESSPESHAFTATEMSGGATANLEPEQVSPLFGTIYDAVILLAHALNRSETHGAGLSGAHLGDHVRALDVAGFSQRIRTDGKGRRLAQYVILDTDGEGSQLVPTHILDTSTWQVQPLGKPIHFPGGSPPAHDASCWFDPNTLCIRGVQPLGSLLTLTIACVLALVGGFLAYFIRLGLQQLRLLRGPHRILLTSQELTFLQRTPSRRRPHVDSGSESRSVVDGGSPRSVTQGSARSLPAFLEHTNVALYQGEWVWLKKFEAGVAPDLRPSSLSFLRKLREMRHENVTAFLGLFVGPGVSAMVLEHCARGSLEDLLQNENLRLDWTFKASLLLDLIRGLRYLHHRRFPHGRLKSRNCVVDTRFVLKITDHGYAEFLESHCSSRPQPAPEELLWTAPELLRGPGKATFKGDVFSLAIILQEVLTRDPPYCSWGLSAEEIIRKVASPPPLCRPLVSPDQGPLECIQLMQLCWEEAPDDRPSLDQIYTQFKSINQGKKTSVVDSMLRMLEKYSESLEDLVQERTEELELERRKTERLLSQMLPPSVAHALKMGTTVEPEYFDQVTIYFSDIVGFTTISALSEPIEVVGFLNDLYTLFDAVLDSHDVYKVETIGDAYMVASGLPRRNGNRHAAEIANLALDILSYAGNFRMRHAPDVPIRVRAGLHSGPCVAGVVGLTMPRYCLFGDTVNTASRMESTGLPYRIHVSQSTVQALLSLDEGYKIDVRGQTELKGKGLEETYWLTGKVGFCRPLPTPLSIKPGDPWQDRINQEIRTGFAKARQGLAEPRKSGEAGPGP</sequence>
<feature type="signal peptide" evidence="3">
    <location>
        <begin position="1"/>
        <end position="66"/>
    </location>
</feature>
<feature type="chain" id="PRO_0000448832" description="Guanylate cyclase D">
    <location>
        <begin position="67"/>
        <end position="1117"/>
    </location>
</feature>
<feature type="topological domain" description="Extracellular" evidence="11">
    <location>
        <begin position="67"/>
        <end position="479"/>
    </location>
</feature>
<feature type="transmembrane region" description="Helical" evidence="3">
    <location>
        <begin position="480"/>
        <end position="500"/>
    </location>
</feature>
<feature type="topological domain" description="Cytoplasmic" evidence="11">
    <location>
        <begin position="501"/>
        <end position="1117"/>
    </location>
</feature>
<feature type="domain" description="Protein kinase" evidence="5">
    <location>
        <begin position="541"/>
        <end position="812"/>
    </location>
</feature>
<feature type="domain" description="Guanylate cyclase" evidence="4">
    <location>
        <begin position="887"/>
        <end position="1017"/>
    </location>
</feature>
<feature type="region of interest" description="Disordered" evidence="6">
    <location>
        <begin position="529"/>
        <end position="557"/>
    </location>
</feature>
<feature type="region of interest" description="Interaction with NCALD" evidence="2">
    <location>
        <begin position="874"/>
        <end position="915"/>
    </location>
</feature>
<feature type="region of interest" description="Disordered" evidence="6">
    <location>
        <begin position="1096"/>
        <end position="1117"/>
    </location>
</feature>
<feature type="disulfide bond" evidence="1">
    <location>
        <begin position="121"/>
        <end position="149"/>
    </location>
</feature>
<feature type="disulfide bond" description="Interchain" evidence="1">
    <location>
        <position position="462"/>
    </location>
</feature>
<feature type="disulfide bond" description="Interchain" evidence="1">
    <location>
        <position position="470"/>
    </location>
</feature>
<gene>
    <name evidence="12" type="primary">Gucy2d</name>
</gene>
<accession>A0A0U1RPR8</accession>
<keyword id="KW-1003">Cell membrane</keyword>
<keyword id="KW-0966">Cell projection</keyword>
<keyword id="KW-0141">cGMP biosynthesis</keyword>
<keyword id="KW-1015">Disulfide bond</keyword>
<keyword id="KW-0456">Lyase</keyword>
<keyword id="KW-0472">Membrane</keyword>
<keyword id="KW-0547">Nucleotide-binding</keyword>
<keyword id="KW-1185">Reference proteome</keyword>
<keyword id="KW-0732">Signal</keyword>
<keyword id="KW-0812">Transmembrane</keyword>
<keyword id="KW-1133">Transmembrane helix</keyword>
<name>GUC2D_MOUSE</name>
<proteinExistence type="evidence at transcript level"/>
<protein>
    <recommendedName>
        <fullName>Guanylate cyclase D</fullName>
        <ecNumber evidence="2">4.6.1.2</ecNumber>
    </recommendedName>
</protein>
<organism>
    <name type="scientific">Mus musculus</name>
    <name type="common">Mouse</name>
    <dbReference type="NCBI Taxonomy" id="10090"/>
    <lineage>
        <taxon>Eukaryota</taxon>
        <taxon>Metazoa</taxon>
        <taxon>Chordata</taxon>
        <taxon>Craniata</taxon>
        <taxon>Vertebrata</taxon>
        <taxon>Euteleostomi</taxon>
        <taxon>Mammalia</taxon>
        <taxon>Eutheria</taxon>
        <taxon>Euarchontoglires</taxon>
        <taxon>Glires</taxon>
        <taxon>Rodentia</taxon>
        <taxon>Myomorpha</taxon>
        <taxon>Muroidea</taxon>
        <taxon>Muridae</taxon>
        <taxon>Murinae</taxon>
        <taxon>Mus</taxon>
        <taxon>Mus</taxon>
    </lineage>
</organism>
<reference key="1">
    <citation type="journal article" date="2009" name="PLoS Biol.">
        <title>Lineage-specific biology revealed by a finished genome assembly of the mouse.</title>
        <authorList>
            <person name="Church D.M."/>
            <person name="Goodstadt L."/>
            <person name="Hillier L.W."/>
            <person name="Zody M.C."/>
            <person name="Goldstein S."/>
            <person name="She X."/>
            <person name="Bult C.J."/>
            <person name="Agarwala R."/>
            <person name="Cherry J.L."/>
            <person name="DiCuccio M."/>
            <person name="Hlavina W."/>
            <person name="Kapustin Y."/>
            <person name="Meric P."/>
            <person name="Maglott D."/>
            <person name="Birtle Z."/>
            <person name="Marques A.C."/>
            <person name="Graves T."/>
            <person name="Zhou S."/>
            <person name="Teague B."/>
            <person name="Potamousis K."/>
            <person name="Churas C."/>
            <person name="Place M."/>
            <person name="Herschleb J."/>
            <person name="Runnheim R."/>
            <person name="Forrest D."/>
            <person name="Amos-Landgraf J."/>
            <person name="Schwartz D.C."/>
            <person name="Cheng Z."/>
            <person name="Lindblad-Toh K."/>
            <person name="Eichler E.E."/>
            <person name="Ponting C.P."/>
        </authorList>
    </citation>
    <scope>NUCLEOTIDE SEQUENCE [LARGE SCALE GENOMIC DNA]</scope>
    <source>
        <strain>C57BL/6J</strain>
    </source>
</reference>
<reference key="2">
    <citation type="journal article" date="1997" name="Proc. Natl. Acad. Sci. U.S.A.">
        <title>A subset of olfactory neurons that selectively express cGMP-stimulated phosphodiesterase (PDE2) and guanylyl cyclase-D define a unique olfactory signal transduction pathway.</title>
        <authorList>
            <person name="Juilfs D.M."/>
            <person name="Fuelle H.J."/>
            <person name="Zhao A.Z."/>
            <person name="Houslay M.D."/>
            <person name="Garbers D.L."/>
            <person name="Beavo J.A."/>
        </authorList>
    </citation>
    <scope>TISSUE SPECIFICITY</scope>
    <scope>SUBCELLULAR LOCATION</scope>
</reference>
<reference key="3">
    <citation type="journal article" date="2007" name="Proc. Natl. Acad. Sci. U.S.A.">
        <title>Contribution of the receptor guanylyl cyclase GC-D to chemosensory function in the olfactory epithelium.</title>
        <authorList>
            <person name="Leinders-Zufall T."/>
            <person name="Cockerham R.E."/>
            <person name="Michalakis S."/>
            <person name="Biel M."/>
            <person name="Garbers D.L."/>
            <person name="Reed R.R."/>
            <person name="Zufall F."/>
            <person name="Munger S.D."/>
        </authorList>
    </citation>
    <scope>DISRUPTION PHENOTYPE</scope>
    <scope>FUNCTION</scope>
</reference>
<reference key="4">
    <citation type="journal article" date="2007" name="Science">
        <title>Detection of near-atmospheric concentrations of CO2 by an olfactory subsystem in the mouse.</title>
        <authorList>
            <person name="Hu J."/>
            <person name="Zhong C."/>
            <person name="Ding C."/>
            <person name="Chi Q."/>
            <person name="Walz A."/>
            <person name="Mombaerts P."/>
            <person name="Matsunami H."/>
            <person name="Luo M."/>
        </authorList>
    </citation>
    <scope>FUNCTION</scope>
</reference>
<reference key="5">
    <citation type="journal article" date="2010" name="Curr. Biol.">
        <title>An olfactory subsystem that detects carbon disulfide and mediates food-related social learning.</title>
        <authorList>
            <person name="Munger S.D."/>
            <person name="Leinders-Zufall T."/>
            <person name="McDougall L.M."/>
            <person name="Cockerham R.E."/>
            <person name="Schmid A."/>
            <person name="Wandernoth P."/>
            <person name="Wennemuth G."/>
            <person name="Biel M."/>
            <person name="Zufall F."/>
            <person name="Kelliher K.R."/>
        </authorList>
    </citation>
    <scope>FUNCTION</scope>
</reference>
<dbReference type="EC" id="4.6.1.2" evidence="2"/>
<dbReference type="EMBL" id="AC111084">
    <property type="status" value="NOT_ANNOTATED_CDS"/>
    <property type="molecule type" value="Genomic_DNA"/>
</dbReference>
<dbReference type="EMBL" id="AC115069">
    <property type="status" value="NOT_ANNOTATED_CDS"/>
    <property type="molecule type" value="Genomic_DNA"/>
</dbReference>
<dbReference type="CCDS" id="CCDS85343.1"/>
<dbReference type="RefSeq" id="NP_001124165.1">
    <property type="nucleotide sequence ID" value="NM_001130693.3"/>
</dbReference>
<dbReference type="SMR" id="A0A0U1RPR8"/>
<dbReference type="FunCoup" id="A0A0U1RPR8">
    <property type="interactions" value="1257"/>
</dbReference>
<dbReference type="STRING" id="10090.ENSMUSP00000146093"/>
<dbReference type="iPTMnet" id="A0A0U1RPR8"/>
<dbReference type="PhosphoSitePlus" id="A0A0U1RPR8"/>
<dbReference type="PaxDb" id="10090-ENSMUSP00000095875"/>
<dbReference type="Ensembl" id="ENSMUST00000206435.2">
    <property type="protein sequence ID" value="ENSMUSP00000146093.2"/>
    <property type="gene ID" value="ENSMUSG00000074003.5"/>
</dbReference>
<dbReference type="GeneID" id="14918"/>
<dbReference type="KEGG" id="mmu:14918"/>
<dbReference type="AGR" id="MGI:106030"/>
<dbReference type="CTD" id="3000"/>
<dbReference type="MGI" id="MGI:106030">
    <property type="gene designation" value="Gucy2d"/>
</dbReference>
<dbReference type="VEuPathDB" id="HostDB:ENSMUSG00000074003"/>
<dbReference type="GeneTree" id="ENSGT00940000162702"/>
<dbReference type="InParanoid" id="A0A0U1RPR8"/>
<dbReference type="OMA" id="YDTMLFA"/>
<dbReference type="OrthoDB" id="1890790at2759"/>
<dbReference type="BioGRID-ORCS" id="14918">
    <property type="hits" value="4 hits in 38 CRISPR screens"/>
</dbReference>
<dbReference type="ChiTaRS" id="Gucy2d">
    <property type="organism name" value="mouse"/>
</dbReference>
<dbReference type="PRO" id="PR:A0A0U1RPR8"/>
<dbReference type="Proteomes" id="UP000000589">
    <property type="component" value="Chromosome 7"/>
</dbReference>
<dbReference type="RNAct" id="A0A0U1RPR8">
    <property type="molecule type" value="protein"/>
</dbReference>
<dbReference type="Bgee" id="ENSMUSG00000074003">
    <property type="expression patterns" value="Expressed in spermatid and 9 other cell types or tissues"/>
</dbReference>
<dbReference type="ExpressionAtlas" id="A0A0U1RPR8">
    <property type="expression patterns" value="baseline and differential"/>
</dbReference>
<dbReference type="GO" id="GO:0060170">
    <property type="term" value="C:ciliary membrane"/>
    <property type="evidence" value="ECO:0007669"/>
    <property type="project" value="UniProtKB-SubCell"/>
</dbReference>
<dbReference type="GO" id="GO:0005524">
    <property type="term" value="F:ATP binding"/>
    <property type="evidence" value="ECO:0007669"/>
    <property type="project" value="InterPro"/>
</dbReference>
<dbReference type="GO" id="GO:0004383">
    <property type="term" value="F:guanylate cyclase activity"/>
    <property type="evidence" value="ECO:0000250"/>
    <property type="project" value="UniProtKB"/>
</dbReference>
<dbReference type="GO" id="GO:0005549">
    <property type="term" value="F:odorant binding"/>
    <property type="evidence" value="ECO:0000315"/>
    <property type="project" value="UniProtKB"/>
</dbReference>
<dbReference type="GO" id="GO:0004984">
    <property type="term" value="F:olfactory receptor activity"/>
    <property type="evidence" value="ECO:0000315"/>
    <property type="project" value="UniProtKB"/>
</dbReference>
<dbReference type="GO" id="GO:0004672">
    <property type="term" value="F:protein kinase activity"/>
    <property type="evidence" value="ECO:0007669"/>
    <property type="project" value="InterPro"/>
</dbReference>
<dbReference type="GO" id="GO:0006182">
    <property type="term" value="P:cGMP biosynthetic process"/>
    <property type="evidence" value="ECO:0000250"/>
    <property type="project" value="UniProtKB"/>
</dbReference>
<dbReference type="GO" id="GO:0003031">
    <property type="term" value="P:detection of carbon dioxide"/>
    <property type="evidence" value="ECO:0000315"/>
    <property type="project" value="UniProtKB"/>
</dbReference>
<dbReference type="GO" id="GO:0050911">
    <property type="term" value="P:detection of chemical stimulus involved in sensory perception of smell"/>
    <property type="evidence" value="ECO:0000315"/>
    <property type="project" value="UniProtKB"/>
</dbReference>
<dbReference type="GO" id="GO:0035556">
    <property type="term" value="P:intracellular signal transduction"/>
    <property type="evidence" value="ECO:0007669"/>
    <property type="project" value="InterPro"/>
</dbReference>
<dbReference type="GO" id="GO:0042048">
    <property type="term" value="P:olfactory behavior"/>
    <property type="evidence" value="ECO:0000315"/>
    <property type="project" value="UniProtKB"/>
</dbReference>
<dbReference type="GO" id="GO:0008355">
    <property type="term" value="P:olfactory learning"/>
    <property type="evidence" value="ECO:0000315"/>
    <property type="project" value="UniProtKB"/>
</dbReference>
<dbReference type="GO" id="GO:0010753">
    <property type="term" value="P:positive regulation of cGMP-mediated signaling"/>
    <property type="evidence" value="ECO:0000314"/>
    <property type="project" value="UniProtKB"/>
</dbReference>
<dbReference type="GO" id="GO:0007168">
    <property type="term" value="P:receptor guanylyl cyclase signaling pathway"/>
    <property type="evidence" value="ECO:0000250"/>
    <property type="project" value="UniProtKB"/>
</dbReference>
<dbReference type="GO" id="GO:0007608">
    <property type="term" value="P:sensory perception of smell"/>
    <property type="evidence" value="ECO:0000315"/>
    <property type="project" value="UniProtKB"/>
</dbReference>
<dbReference type="CDD" id="cd07302">
    <property type="entry name" value="CHD"/>
    <property type="match status" value="1"/>
</dbReference>
<dbReference type="CDD" id="cd06371">
    <property type="entry name" value="PBP1_sensory_GC_DEF-like"/>
    <property type="match status" value="1"/>
</dbReference>
<dbReference type="CDD" id="cd14043">
    <property type="entry name" value="PK_GC-2D"/>
    <property type="match status" value="1"/>
</dbReference>
<dbReference type="FunFam" id="1.10.510.10:FF:000404">
    <property type="entry name" value="Guanylate cyclase"/>
    <property type="match status" value="1"/>
</dbReference>
<dbReference type="FunFam" id="3.30.70.1230:FF:000013">
    <property type="entry name" value="Guanylate cyclase"/>
    <property type="match status" value="1"/>
</dbReference>
<dbReference type="FunFam" id="3.40.50.2300:FF:000114">
    <property type="entry name" value="Guanylate cyclase"/>
    <property type="match status" value="1"/>
</dbReference>
<dbReference type="FunFam" id="3.40.50.2300:FF:000333">
    <property type="entry name" value="Guanylate cyclase"/>
    <property type="match status" value="1"/>
</dbReference>
<dbReference type="Gene3D" id="3.40.50.2300">
    <property type="match status" value="2"/>
</dbReference>
<dbReference type="Gene3D" id="6.10.250.780">
    <property type="match status" value="1"/>
</dbReference>
<dbReference type="Gene3D" id="3.30.70.1230">
    <property type="entry name" value="Nucleotide cyclase"/>
    <property type="match status" value="1"/>
</dbReference>
<dbReference type="Gene3D" id="1.10.510.10">
    <property type="entry name" value="Transferase(Phosphotransferase) domain 1"/>
    <property type="match status" value="1"/>
</dbReference>
<dbReference type="InterPro" id="IPR001054">
    <property type="entry name" value="A/G_cyclase"/>
</dbReference>
<dbReference type="InterPro" id="IPR018297">
    <property type="entry name" value="A/G_cyclase_CS"/>
</dbReference>
<dbReference type="InterPro" id="IPR001828">
    <property type="entry name" value="ANF_lig-bd_rcpt"/>
</dbReference>
<dbReference type="InterPro" id="IPR050401">
    <property type="entry name" value="Cyclic_nucleotide_synthase"/>
</dbReference>
<dbReference type="InterPro" id="IPR011009">
    <property type="entry name" value="Kinase-like_dom_sf"/>
</dbReference>
<dbReference type="InterPro" id="IPR029787">
    <property type="entry name" value="Nucleotide_cyclase"/>
</dbReference>
<dbReference type="InterPro" id="IPR028082">
    <property type="entry name" value="Peripla_BP_I"/>
</dbReference>
<dbReference type="InterPro" id="IPR000719">
    <property type="entry name" value="Prot_kinase_dom"/>
</dbReference>
<dbReference type="InterPro" id="IPR001245">
    <property type="entry name" value="Ser-Thr/Tyr_kinase_cat_dom"/>
</dbReference>
<dbReference type="PANTHER" id="PTHR11920:SF477">
    <property type="entry name" value="GUANYLATE CYCLASE D"/>
    <property type="match status" value="1"/>
</dbReference>
<dbReference type="PANTHER" id="PTHR11920">
    <property type="entry name" value="GUANYLYL CYCLASE"/>
    <property type="match status" value="1"/>
</dbReference>
<dbReference type="Pfam" id="PF01094">
    <property type="entry name" value="ANF_receptor"/>
    <property type="match status" value="1"/>
</dbReference>
<dbReference type="Pfam" id="PF00211">
    <property type="entry name" value="Guanylate_cyc"/>
    <property type="match status" value="1"/>
</dbReference>
<dbReference type="Pfam" id="PF07714">
    <property type="entry name" value="PK_Tyr_Ser-Thr"/>
    <property type="match status" value="1"/>
</dbReference>
<dbReference type="SMART" id="SM00044">
    <property type="entry name" value="CYCc"/>
    <property type="match status" value="1"/>
</dbReference>
<dbReference type="SUPFAM" id="SSF55073">
    <property type="entry name" value="Nucleotide cyclase"/>
    <property type="match status" value="1"/>
</dbReference>
<dbReference type="SUPFAM" id="SSF53822">
    <property type="entry name" value="Periplasmic binding protein-like I"/>
    <property type="match status" value="1"/>
</dbReference>
<dbReference type="SUPFAM" id="SSF56112">
    <property type="entry name" value="Protein kinase-like (PK-like)"/>
    <property type="match status" value="1"/>
</dbReference>
<dbReference type="PROSITE" id="PS00452">
    <property type="entry name" value="GUANYLATE_CYCLASE_1"/>
    <property type="match status" value="1"/>
</dbReference>
<dbReference type="PROSITE" id="PS50125">
    <property type="entry name" value="GUANYLATE_CYCLASE_2"/>
    <property type="match status" value="1"/>
</dbReference>
<dbReference type="PROSITE" id="PS50011">
    <property type="entry name" value="PROTEIN_KINASE_DOM"/>
    <property type="match status" value="1"/>
</dbReference>